<organism>
    <name type="scientific">Pseudomonas syringae pv. syringae (strain B728a)</name>
    <dbReference type="NCBI Taxonomy" id="205918"/>
    <lineage>
        <taxon>Bacteria</taxon>
        <taxon>Pseudomonadati</taxon>
        <taxon>Pseudomonadota</taxon>
        <taxon>Gammaproteobacteria</taxon>
        <taxon>Pseudomonadales</taxon>
        <taxon>Pseudomonadaceae</taxon>
        <taxon>Pseudomonas</taxon>
        <taxon>Pseudomonas syringae</taxon>
    </lineage>
</organism>
<proteinExistence type="inferred from homology"/>
<sequence>MLTHLDSQGRANMVDVTDKAVTSREAVAEAFVRMLPTTLQMIVSGGHPKGDVFAVARIAGIQAAKKTSDLIPLCHPLMLTSIKVHLAAEGDDAVRITASCKLAGQTGVEMEALTAASVAALTIYDMCKAVDRGMVIESVRLLEKLGGKSGHFIADQAQVSS</sequence>
<evidence type="ECO:0000255" key="1">
    <source>
        <dbReference type="HAMAP-Rule" id="MF_01224"/>
    </source>
</evidence>
<feature type="chain" id="PRO_1000054122" description="Cyclic pyranopterin monophosphate synthase">
    <location>
        <begin position="1"/>
        <end position="161"/>
    </location>
</feature>
<feature type="active site" evidence="1">
    <location>
        <position position="125"/>
    </location>
</feature>
<feature type="binding site" evidence="1">
    <location>
        <begin position="73"/>
        <end position="75"/>
    </location>
    <ligand>
        <name>substrate</name>
    </ligand>
</feature>
<feature type="binding site" evidence="1">
    <location>
        <begin position="110"/>
        <end position="111"/>
    </location>
    <ligand>
        <name>substrate</name>
    </ligand>
</feature>
<reference key="1">
    <citation type="journal article" date="2005" name="Proc. Natl. Acad. Sci. U.S.A.">
        <title>Comparison of the complete genome sequences of Pseudomonas syringae pv. syringae B728a and pv. tomato DC3000.</title>
        <authorList>
            <person name="Feil H."/>
            <person name="Feil W.S."/>
            <person name="Chain P."/>
            <person name="Larimer F."/>
            <person name="Dibartolo G."/>
            <person name="Copeland A."/>
            <person name="Lykidis A."/>
            <person name="Trong S."/>
            <person name="Nolan M."/>
            <person name="Goltsman E."/>
            <person name="Thiel J."/>
            <person name="Malfatti S."/>
            <person name="Loper J.E."/>
            <person name="Lapidus A."/>
            <person name="Detter J.C."/>
            <person name="Land M."/>
            <person name="Richardson P.M."/>
            <person name="Kyrpides N.C."/>
            <person name="Ivanova N."/>
            <person name="Lindow S.E."/>
        </authorList>
    </citation>
    <scope>NUCLEOTIDE SEQUENCE [LARGE SCALE GENOMIC DNA]</scope>
    <source>
        <strain>B728a</strain>
    </source>
</reference>
<protein>
    <recommendedName>
        <fullName evidence="1">Cyclic pyranopterin monophosphate synthase</fullName>
        <ecNumber evidence="1">4.6.1.17</ecNumber>
    </recommendedName>
    <alternativeName>
        <fullName evidence="1">Molybdenum cofactor biosynthesis protein C</fullName>
    </alternativeName>
</protein>
<gene>
    <name evidence="1" type="primary">moaC</name>
    <name type="ordered locus">Psyr_1067</name>
</gene>
<keyword id="KW-0456">Lyase</keyword>
<keyword id="KW-0501">Molybdenum cofactor biosynthesis</keyword>
<comment type="function">
    <text evidence="1">Catalyzes the conversion of (8S)-3',8-cyclo-7,8-dihydroguanosine 5'-triphosphate to cyclic pyranopterin monophosphate (cPMP).</text>
</comment>
<comment type="catalytic activity">
    <reaction evidence="1">
        <text>(8S)-3',8-cyclo-7,8-dihydroguanosine 5'-triphosphate = cyclic pyranopterin phosphate + diphosphate</text>
        <dbReference type="Rhea" id="RHEA:49580"/>
        <dbReference type="ChEBI" id="CHEBI:33019"/>
        <dbReference type="ChEBI" id="CHEBI:59648"/>
        <dbReference type="ChEBI" id="CHEBI:131766"/>
        <dbReference type="EC" id="4.6.1.17"/>
    </reaction>
</comment>
<comment type="pathway">
    <text evidence="1">Cofactor biosynthesis; molybdopterin biosynthesis.</text>
</comment>
<comment type="subunit">
    <text evidence="1">Homohexamer; trimer of dimers.</text>
</comment>
<comment type="similarity">
    <text evidence="1">Belongs to the MoaC family.</text>
</comment>
<dbReference type="EC" id="4.6.1.17" evidence="1"/>
<dbReference type="EMBL" id="CP000075">
    <property type="protein sequence ID" value="AAY36123.1"/>
    <property type="molecule type" value="Genomic_DNA"/>
</dbReference>
<dbReference type="RefSeq" id="WP_003341741.1">
    <property type="nucleotide sequence ID" value="NC_007005.1"/>
</dbReference>
<dbReference type="RefSeq" id="YP_234161.1">
    <property type="nucleotide sequence ID" value="NC_007005.1"/>
</dbReference>
<dbReference type="SMR" id="Q4ZXJ9"/>
<dbReference type="STRING" id="205918.Psyr_1067"/>
<dbReference type="GeneID" id="77277023"/>
<dbReference type="KEGG" id="psb:Psyr_1067"/>
<dbReference type="PATRIC" id="fig|205918.7.peg.1097"/>
<dbReference type="eggNOG" id="COG0315">
    <property type="taxonomic scope" value="Bacteria"/>
</dbReference>
<dbReference type="HOGENOM" id="CLU_074693_1_1_6"/>
<dbReference type="OrthoDB" id="9794429at2"/>
<dbReference type="UniPathway" id="UPA00344"/>
<dbReference type="Proteomes" id="UP000000426">
    <property type="component" value="Chromosome"/>
</dbReference>
<dbReference type="GO" id="GO:0061799">
    <property type="term" value="F:cyclic pyranopterin monophosphate synthase activity"/>
    <property type="evidence" value="ECO:0007669"/>
    <property type="project" value="UniProtKB-UniRule"/>
</dbReference>
<dbReference type="GO" id="GO:0006777">
    <property type="term" value="P:Mo-molybdopterin cofactor biosynthetic process"/>
    <property type="evidence" value="ECO:0007669"/>
    <property type="project" value="UniProtKB-UniRule"/>
</dbReference>
<dbReference type="CDD" id="cd01420">
    <property type="entry name" value="MoaC_PE"/>
    <property type="match status" value="1"/>
</dbReference>
<dbReference type="FunFam" id="3.30.70.640:FF:000001">
    <property type="entry name" value="Cyclic pyranopterin monophosphate synthase"/>
    <property type="match status" value="1"/>
</dbReference>
<dbReference type="Gene3D" id="3.30.70.640">
    <property type="entry name" value="Molybdopterin cofactor biosynthesis C (MoaC) domain"/>
    <property type="match status" value="1"/>
</dbReference>
<dbReference type="HAMAP" id="MF_01224_B">
    <property type="entry name" value="MoaC_B"/>
    <property type="match status" value="1"/>
</dbReference>
<dbReference type="InterPro" id="IPR023045">
    <property type="entry name" value="MoaC"/>
</dbReference>
<dbReference type="InterPro" id="IPR047594">
    <property type="entry name" value="MoaC_bact/euk"/>
</dbReference>
<dbReference type="InterPro" id="IPR036522">
    <property type="entry name" value="MoaC_sf"/>
</dbReference>
<dbReference type="InterPro" id="IPR050105">
    <property type="entry name" value="MoCo_biosynth_MoaA/MoaC"/>
</dbReference>
<dbReference type="InterPro" id="IPR002820">
    <property type="entry name" value="Mopterin_CF_biosynth-C_dom"/>
</dbReference>
<dbReference type="NCBIfam" id="TIGR00581">
    <property type="entry name" value="moaC"/>
    <property type="match status" value="1"/>
</dbReference>
<dbReference type="NCBIfam" id="NF006870">
    <property type="entry name" value="PRK09364.1"/>
    <property type="match status" value="1"/>
</dbReference>
<dbReference type="PANTHER" id="PTHR22960:SF29">
    <property type="entry name" value="CYCLIC PYRANOPTERIN MONOPHOSPHATE SYNTHASE"/>
    <property type="match status" value="1"/>
</dbReference>
<dbReference type="PANTHER" id="PTHR22960">
    <property type="entry name" value="MOLYBDOPTERIN COFACTOR SYNTHESIS PROTEIN A"/>
    <property type="match status" value="1"/>
</dbReference>
<dbReference type="Pfam" id="PF01967">
    <property type="entry name" value="MoaC"/>
    <property type="match status" value="1"/>
</dbReference>
<dbReference type="SUPFAM" id="SSF55040">
    <property type="entry name" value="Molybdenum cofactor biosynthesis protein C, MoaC"/>
    <property type="match status" value="1"/>
</dbReference>
<name>MOAC_PSEU2</name>
<accession>Q4ZXJ9</accession>